<sequence length="324" mass="35834">MITSNRKPTVPDFMRPVAELESQVAELKRLAPKNDKVIENKINRFQDKLTKLQKEIFSSLTPLQRLNLVRQSERPTTLDYIPNILDEWIELHGDRGGADDPALVGGIGKIDGHSIVFIGHQRGRGTKENVARNFGMPAPGGYRKALRLMKHANRFGMPILTFIDTPGAWAGLKAEELGQGEAIAVNLREMFSFEVPIICTIIGEGGSGGALGIGIGDSIIMLEYAVYTVATPEACAAILWKNSKESLAAAEALKITSHDLKVMGIVDEILTEPIGGAQADHQSASKYLRKELIKQLNILLRLNKSELKIQRYEKFRKMGAFYEI</sequence>
<evidence type="ECO:0000250" key="1"/>
<evidence type="ECO:0000255" key="2">
    <source>
        <dbReference type="HAMAP-Rule" id="MF_00823"/>
    </source>
</evidence>
<evidence type="ECO:0000255" key="3">
    <source>
        <dbReference type="PROSITE-ProRule" id="PRU01137"/>
    </source>
</evidence>
<organism>
    <name type="scientific">Porphyra purpurea</name>
    <name type="common">Red seaweed</name>
    <name type="synonym">Ulva purpurea</name>
    <dbReference type="NCBI Taxonomy" id="2787"/>
    <lineage>
        <taxon>Eukaryota</taxon>
        <taxon>Rhodophyta</taxon>
        <taxon>Bangiophyceae</taxon>
        <taxon>Bangiales</taxon>
        <taxon>Bangiaceae</taxon>
        <taxon>Porphyra</taxon>
    </lineage>
</organism>
<feature type="chain" id="PRO_0000146786" description="Acetyl-coenzyme A carboxylase carboxyl transferase subunit alpha">
    <location>
        <begin position="1"/>
        <end position="324"/>
    </location>
</feature>
<feature type="domain" description="CoA carboxyltransferase C-terminal" evidence="3">
    <location>
        <begin position="44"/>
        <end position="298"/>
    </location>
</feature>
<geneLocation type="chloroplast"/>
<protein>
    <recommendedName>
        <fullName evidence="2">Acetyl-coenzyme A carboxylase carboxyl transferase subunit alpha</fullName>
        <shortName evidence="2">ACCase subunit alpha</shortName>
        <shortName evidence="2">Acetyl-CoA carboxylase carboxyltransferase subunit alpha</shortName>
        <ecNumber evidence="2">2.1.3.15</ecNumber>
    </recommendedName>
</protein>
<name>ACCA_PORPU</name>
<keyword id="KW-0067">ATP-binding</keyword>
<keyword id="KW-0150">Chloroplast</keyword>
<keyword id="KW-0275">Fatty acid biosynthesis</keyword>
<keyword id="KW-0276">Fatty acid metabolism</keyword>
<keyword id="KW-0444">Lipid biosynthesis</keyword>
<keyword id="KW-0443">Lipid metabolism</keyword>
<keyword id="KW-0547">Nucleotide-binding</keyword>
<keyword id="KW-0934">Plastid</keyword>
<keyword id="KW-0808">Transferase</keyword>
<reference key="1">
    <citation type="journal article" date="1995" name="Plant Mol. Biol. Rep.">
        <title>Complete nucleotide sequence of the Porphyra purpurea chloroplast genome.</title>
        <authorList>
            <person name="Reith M.E."/>
            <person name="Munholland J."/>
        </authorList>
    </citation>
    <scope>NUCLEOTIDE SEQUENCE [LARGE SCALE GENOMIC DNA]</scope>
    <source>
        <strain>Avonport</strain>
    </source>
</reference>
<gene>
    <name evidence="2" type="primary">accA</name>
</gene>
<proteinExistence type="inferred from homology"/>
<comment type="function">
    <text evidence="2">Component of the acetyl coenzyme A carboxylase (ACC) complex. First, biotin carboxylase catalyzes the carboxylation of biotin on its carrier protein (BCCP) and then the CO(2) group is transferred by the carboxyltransferase to acetyl-CoA to form malonyl-CoA.</text>
</comment>
<comment type="catalytic activity">
    <reaction evidence="2">
        <text>N(6)-carboxybiotinyl-L-lysyl-[protein] + acetyl-CoA = N(6)-biotinyl-L-lysyl-[protein] + malonyl-CoA</text>
        <dbReference type="Rhea" id="RHEA:54728"/>
        <dbReference type="Rhea" id="RHEA-COMP:10505"/>
        <dbReference type="Rhea" id="RHEA-COMP:10506"/>
        <dbReference type="ChEBI" id="CHEBI:57288"/>
        <dbReference type="ChEBI" id="CHEBI:57384"/>
        <dbReference type="ChEBI" id="CHEBI:83144"/>
        <dbReference type="ChEBI" id="CHEBI:83145"/>
        <dbReference type="EC" id="2.1.3.15"/>
    </reaction>
</comment>
<comment type="pathway">
    <text evidence="2">Lipid metabolism; malonyl-CoA biosynthesis; malonyl-CoA from acetyl-CoA: step 1/1.</text>
</comment>
<comment type="subunit">
    <text evidence="1">Acetyl-CoA carboxylase is a heterohexamer composed of biotin carboxyl carrier protein (accB), biotin carboxylase (accC) and two subunits each of ACCase subunit alpha (accA) and ACCase subunit beta (accD).</text>
</comment>
<comment type="subcellular location">
    <subcellularLocation>
        <location>Plastid</location>
        <location>Chloroplast</location>
    </subcellularLocation>
</comment>
<comment type="similarity">
    <text evidence="2">Belongs to the AccA family.</text>
</comment>
<accession>P51371</accession>
<dbReference type="EC" id="2.1.3.15" evidence="2"/>
<dbReference type="EMBL" id="U38804">
    <property type="protein sequence ID" value="AAC08257.1"/>
    <property type="molecule type" value="Genomic_DNA"/>
</dbReference>
<dbReference type="PIR" id="S73292">
    <property type="entry name" value="S73292"/>
</dbReference>
<dbReference type="RefSeq" id="NP_053981.1">
    <property type="nucleotide sequence ID" value="NC_000925.1"/>
</dbReference>
<dbReference type="SMR" id="P51371"/>
<dbReference type="GeneID" id="810011"/>
<dbReference type="UniPathway" id="UPA00655">
    <property type="reaction ID" value="UER00711"/>
</dbReference>
<dbReference type="GO" id="GO:0009317">
    <property type="term" value="C:acetyl-CoA carboxylase complex"/>
    <property type="evidence" value="ECO:0007669"/>
    <property type="project" value="InterPro"/>
</dbReference>
<dbReference type="GO" id="GO:0009507">
    <property type="term" value="C:chloroplast"/>
    <property type="evidence" value="ECO:0007669"/>
    <property type="project" value="UniProtKB-SubCell"/>
</dbReference>
<dbReference type="GO" id="GO:0003989">
    <property type="term" value="F:acetyl-CoA carboxylase activity"/>
    <property type="evidence" value="ECO:0007669"/>
    <property type="project" value="InterPro"/>
</dbReference>
<dbReference type="GO" id="GO:0005524">
    <property type="term" value="F:ATP binding"/>
    <property type="evidence" value="ECO:0007669"/>
    <property type="project" value="UniProtKB-KW"/>
</dbReference>
<dbReference type="GO" id="GO:0016743">
    <property type="term" value="F:carboxyl- or carbamoyltransferase activity"/>
    <property type="evidence" value="ECO:0007669"/>
    <property type="project" value="UniProtKB-UniRule"/>
</dbReference>
<dbReference type="GO" id="GO:0006633">
    <property type="term" value="P:fatty acid biosynthetic process"/>
    <property type="evidence" value="ECO:0007669"/>
    <property type="project" value="UniProtKB-KW"/>
</dbReference>
<dbReference type="GO" id="GO:2001295">
    <property type="term" value="P:malonyl-CoA biosynthetic process"/>
    <property type="evidence" value="ECO:0007669"/>
    <property type="project" value="UniProtKB-UniRule"/>
</dbReference>
<dbReference type="Gene3D" id="3.90.226.10">
    <property type="entry name" value="2-enoyl-CoA Hydratase, Chain A, domain 1"/>
    <property type="match status" value="1"/>
</dbReference>
<dbReference type="HAMAP" id="MF_00823">
    <property type="entry name" value="AcetylCoA_CT_alpha"/>
    <property type="match status" value="1"/>
</dbReference>
<dbReference type="InterPro" id="IPR001095">
    <property type="entry name" value="Acetyl_CoA_COase_a_su"/>
</dbReference>
<dbReference type="InterPro" id="IPR029045">
    <property type="entry name" value="ClpP/crotonase-like_dom_sf"/>
</dbReference>
<dbReference type="InterPro" id="IPR011763">
    <property type="entry name" value="COA_CT_C"/>
</dbReference>
<dbReference type="NCBIfam" id="TIGR00513">
    <property type="entry name" value="accA"/>
    <property type="match status" value="1"/>
</dbReference>
<dbReference type="NCBIfam" id="NF041504">
    <property type="entry name" value="AccA_sub"/>
    <property type="match status" value="1"/>
</dbReference>
<dbReference type="NCBIfam" id="NF004344">
    <property type="entry name" value="PRK05724.1"/>
    <property type="match status" value="1"/>
</dbReference>
<dbReference type="PANTHER" id="PTHR42853">
    <property type="entry name" value="ACETYL-COENZYME A CARBOXYLASE CARBOXYL TRANSFERASE SUBUNIT ALPHA"/>
    <property type="match status" value="1"/>
</dbReference>
<dbReference type="PANTHER" id="PTHR42853:SF3">
    <property type="entry name" value="ACETYL-COENZYME A CARBOXYLASE CARBOXYL TRANSFERASE SUBUNIT ALPHA, CHLOROPLASTIC"/>
    <property type="match status" value="1"/>
</dbReference>
<dbReference type="Pfam" id="PF03255">
    <property type="entry name" value="ACCA"/>
    <property type="match status" value="1"/>
</dbReference>
<dbReference type="PRINTS" id="PR01069">
    <property type="entry name" value="ACCCTRFRASEA"/>
</dbReference>
<dbReference type="SUPFAM" id="SSF52096">
    <property type="entry name" value="ClpP/crotonase"/>
    <property type="match status" value="1"/>
</dbReference>
<dbReference type="PROSITE" id="PS50989">
    <property type="entry name" value="COA_CT_CTER"/>
    <property type="match status" value="1"/>
</dbReference>